<evidence type="ECO:0000250" key="1"/>
<evidence type="ECO:0000255" key="2">
    <source>
        <dbReference type="HAMAP-Rule" id="MF_01303"/>
    </source>
</evidence>
<comment type="function">
    <text evidence="2">Apoprotein for the two 4Fe-4S centers FA and FB of photosystem I (PSI); essential for photochemical activity. FB is the terminal electron acceptor of PSI, donating electrons to ferredoxin. The C-terminus interacts with PsaA/B/D and helps assemble the protein into the PSI complex. Required for binding of PsaD and PsaE to PSI. PSI is a plastocyanin-ferredoxin oxidoreductase, converting photonic excitation into a charge separation, which transfers an electron from the donor P700 chlorophyll pair to the spectroscopically characterized acceptors A0, A1, FX, FA and FB in turn.</text>
</comment>
<comment type="catalytic activity">
    <reaction evidence="2">
        <text>reduced [plastocyanin] + hnu + oxidized [2Fe-2S]-[ferredoxin] = oxidized [plastocyanin] + reduced [2Fe-2S]-[ferredoxin]</text>
        <dbReference type="Rhea" id="RHEA:30407"/>
        <dbReference type="Rhea" id="RHEA-COMP:10000"/>
        <dbReference type="Rhea" id="RHEA-COMP:10001"/>
        <dbReference type="Rhea" id="RHEA-COMP:10039"/>
        <dbReference type="Rhea" id="RHEA-COMP:10040"/>
        <dbReference type="ChEBI" id="CHEBI:29036"/>
        <dbReference type="ChEBI" id="CHEBI:30212"/>
        <dbReference type="ChEBI" id="CHEBI:33737"/>
        <dbReference type="ChEBI" id="CHEBI:33738"/>
        <dbReference type="ChEBI" id="CHEBI:49552"/>
        <dbReference type="EC" id="1.97.1.12"/>
    </reaction>
</comment>
<comment type="cofactor">
    <cofactor evidence="2">
        <name>[4Fe-4S] cluster</name>
        <dbReference type="ChEBI" id="CHEBI:49883"/>
    </cofactor>
    <text evidence="2">Binds 2 [4Fe-4S] clusters. Cluster 2 is most probably the spectroscopically characterized electron acceptor FA and cluster 1 is most probably FB.</text>
</comment>
<comment type="subunit">
    <text evidence="2">The eukaryotic PSI reaction center is composed of at least 11 subunits.</text>
</comment>
<comment type="subcellular location">
    <subcellularLocation>
        <location evidence="2">Plastid</location>
        <location evidence="2">Chloroplast thylakoid membrane</location>
        <topology evidence="2">Peripheral membrane protein</topology>
        <orientation evidence="2">Stromal side</orientation>
    </subcellularLocation>
</comment>
<accession>Q0G9G8</accession>
<feature type="initiator methionine" description="Removed" evidence="1">
    <location>
        <position position="1"/>
    </location>
</feature>
<feature type="chain" id="PRO_0000275987" description="Photosystem I iron-sulfur center">
    <location>
        <begin position="2"/>
        <end position="81"/>
    </location>
</feature>
<feature type="domain" description="4Fe-4S ferredoxin-type 1" evidence="2">
    <location>
        <begin position="2"/>
        <end position="31"/>
    </location>
</feature>
<feature type="domain" description="4Fe-4S ferredoxin-type 2" evidence="2">
    <location>
        <begin position="39"/>
        <end position="68"/>
    </location>
</feature>
<feature type="binding site" evidence="2">
    <location>
        <position position="11"/>
    </location>
    <ligand>
        <name>[4Fe-4S] cluster</name>
        <dbReference type="ChEBI" id="CHEBI:49883"/>
        <label>1</label>
    </ligand>
</feature>
<feature type="binding site" evidence="2">
    <location>
        <position position="14"/>
    </location>
    <ligand>
        <name>[4Fe-4S] cluster</name>
        <dbReference type="ChEBI" id="CHEBI:49883"/>
        <label>1</label>
    </ligand>
</feature>
<feature type="binding site" evidence="2">
    <location>
        <position position="17"/>
    </location>
    <ligand>
        <name>[4Fe-4S] cluster</name>
        <dbReference type="ChEBI" id="CHEBI:49883"/>
        <label>1</label>
    </ligand>
</feature>
<feature type="binding site" evidence="2">
    <location>
        <position position="21"/>
    </location>
    <ligand>
        <name>[4Fe-4S] cluster</name>
        <dbReference type="ChEBI" id="CHEBI:49883"/>
        <label>2</label>
    </ligand>
</feature>
<feature type="binding site" evidence="2">
    <location>
        <position position="48"/>
    </location>
    <ligand>
        <name>[4Fe-4S] cluster</name>
        <dbReference type="ChEBI" id="CHEBI:49883"/>
        <label>2</label>
    </ligand>
</feature>
<feature type="binding site" evidence="2">
    <location>
        <position position="51"/>
    </location>
    <ligand>
        <name>[4Fe-4S] cluster</name>
        <dbReference type="ChEBI" id="CHEBI:49883"/>
        <label>2</label>
    </ligand>
</feature>
<feature type="binding site" evidence="2">
    <location>
        <position position="54"/>
    </location>
    <ligand>
        <name>[4Fe-4S] cluster</name>
        <dbReference type="ChEBI" id="CHEBI:49883"/>
        <label>2</label>
    </ligand>
</feature>
<feature type="binding site" evidence="2">
    <location>
        <position position="58"/>
    </location>
    <ligand>
        <name>[4Fe-4S] cluster</name>
        <dbReference type="ChEBI" id="CHEBI:49883"/>
        <label>1</label>
    </ligand>
</feature>
<organism>
    <name type="scientific">Liriodendron tulipifera</name>
    <name type="common">Tuliptree</name>
    <name type="synonym">Tulip poplar</name>
    <dbReference type="NCBI Taxonomy" id="3415"/>
    <lineage>
        <taxon>Eukaryota</taxon>
        <taxon>Viridiplantae</taxon>
        <taxon>Streptophyta</taxon>
        <taxon>Embryophyta</taxon>
        <taxon>Tracheophyta</taxon>
        <taxon>Spermatophyta</taxon>
        <taxon>Magnoliopsida</taxon>
        <taxon>Magnoliidae</taxon>
        <taxon>Magnoliales</taxon>
        <taxon>Magnoliaceae</taxon>
        <taxon>Liriodendron</taxon>
    </lineage>
</organism>
<name>PSAC_LIRTU</name>
<sequence length="81" mass="9049">MSHSVKIYDTCIGCTQCVRACPTDVLEMIPWDGCKAKQIAPAPRTEDCVGCKRCESACPTDFLSVRVYLWHETTRSMGLAY</sequence>
<reference key="1">
    <citation type="journal article" date="2006" name="BMC Evol. Biol.">
        <title>Complete plastid genome sequences of Drimys, Liriodendron, and Piper: implications for the phylogenetic relationships of magnoliids.</title>
        <authorList>
            <person name="Cai Z."/>
            <person name="Penaflor C."/>
            <person name="Kuehl J.V."/>
            <person name="Leebens-Mack J."/>
            <person name="Carlson J.E."/>
            <person name="dePamphilis C.W."/>
            <person name="Boore J.L."/>
            <person name="Jansen R.K."/>
        </authorList>
    </citation>
    <scope>NUCLEOTIDE SEQUENCE [LARGE SCALE GENOMIC DNA]</scope>
</reference>
<geneLocation type="chloroplast"/>
<proteinExistence type="inferred from homology"/>
<gene>
    <name evidence="2" type="primary">psaC</name>
</gene>
<protein>
    <recommendedName>
        <fullName evidence="2">Photosystem I iron-sulfur center</fullName>
        <ecNumber evidence="2">1.97.1.12</ecNumber>
    </recommendedName>
    <alternativeName>
        <fullName evidence="2">9 kDa polypeptide</fullName>
    </alternativeName>
    <alternativeName>
        <fullName evidence="2">PSI-C</fullName>
    </alternativeName>
    <alternativeName>
        <fullName evidence="2">Photosystem I subunit VII</fullName>
    </alternativeName>
    <alternativeName>
        <fullName evidence="2">PsaC</fullName>
    </alternativeName>
</protein>
<keyword id="KW-0004">4Fe-4S</keyword>
<keyword id="KW-0150">Chloroplast</keyword>
<keyword id="KW-0249">Electron transport</keyword>
<keyword id="KW-0408">Iron</keyword>
<keyword id="KW-0411">Iron-sulfur</keyword>
<keyword id="KW-0472">Membrane</keyword>
<keyword id="KW-0479">Metal-binding</keyword>
<keyword id="KW-0560">Oxidoreductase</keyword>
<keyword id="KW-0602">Photosynthesis</keyword>
<keyword id="KW-0603">Photosystem I</keyword>
<keyword id="KW-0934">Plastid</keyword>
<keyword id="KW-0677">Repeat</keyword>
<keyword id="KW-0793">Thylakoid</keyword>
<keyword id="KW-0813">Transport</keyword>
<dbReference type="EC" id="1.97.1.12" evidence="2"/>
<dbReference type="EMBL" id="DQ899947">
    <property type="protein sequence ID" value="ABI32560.1"/>
    <property type="molecule type" value="Genomic_DNA"/>
</dbReference>
<dbReference type="RefSeq" id="YP_740253.1">
    <property type="nucleotide sequence ID" value="NC_008326.1"/>
</dbReference>
<dbReference type="SMR" id="Q0G9G8"/>
<dbReference type="GeneID" id="4266685"/>
<dbReference type="GO" id="GO:0009535">
    <property type="term" value="C:chloroplast thylakoid membrane"/>
    <property type="evidence" value="ECO:0007669"/>
    <property type="project" value="UniProtKB-SubCell"/>
</dbReference>
<dbReference type="GO" id="GO:0009522">
    <property type="term" value="C:photosystem I"/>
    <property type="evidence" value="ECO:0007669"/>
    <property type="project" value="UniProtKB-KW"/>
</dbReference>
<dbReference type="GO" id="GO:0051539">
    <property type="term" value="F:4 iron, 4 sulfur cluster binding"/>
    <property type="evidence" value="ECO:0007669"/>
    <property type="project" value="UniProtKB-KW"/>
</dbReference>
<dbReference type="GO" id="GO:0009055">
    <property type="term" value="F:electron transfer activity"/>
    <property type="evidence" value="ECO:0007669"/>
    <property type="project" value="UniProtKB-UniRule"/>
</dbReference>
<dbReference type="GO" id="GO:0046872">
    <property type="term" value="F:metal ion binding"/>
    <property type="evidence" value="ECO:0007669"/>
    <property type="project" value="UniProtKB-KW"/>
</dbReference>
<dbReference type="GO" id="GO:0016491">
    <property type="term" value="F:oxidoreductase activity"/>
    <property type="evidence" value="ECO:0007669"/>
    <property type="project" value="UniProtKB-KW"/>
</dbReference>
<dbReference type="GO" id="GO:0009773">
    <property type="term" value="P:photosynthetic electron transport in photosystem I"/>
    <property type="evidence" value="ECO:0007669"/>
    <property type="project" value="InterPro"/>
</dbReference>
<dbReference type="FunFam" id="3.30.70.20:FF:000001">
    <property type="entry name" value="Photosystem I iron-sulfur center"/>
    <property type="match status" value="1"/>
</dbReference>
<dbReference type="Gene3D" id="3.30.70.20">
    <property type="match status" value="1"/>
</dbReference>
<dbReference type="HAMAP" id="MF_01303">
    <property type="entry name" value="PSI_PsaC"/>
    <property type="match status" value="1"/>
</dbReference>
<dbReference type="InterPro" id="IPR017896">
    <property type="entry name" value="4Fe4S_Fe-S-bd"/>
</dbReference>
<dbReference type="InterPro" id="IPR017900">
    <property type="entry name" value="4Fe4S_Fe_S_CS"/>
</dbReference>
<dbReference type="InterPro" id="IPR050157">
    <property type="entry name" value="PSI_iron-sulfur_center"/>
</dbReference>
<dbReference type="InterPro" id="IPR017491">
    <property type="entry name" value="PSI_PsaC"/>
</dbReference>
<dbReference type="NCBIfam" id="TIGR03048">
    <property type="entry name" value="PS_I_psaC"/>
    <property type="match status" value="1"/>
</dbReference>
<dbReference type="PANTHER" id="PTHR24960:SF79">
    <property type="entry name" value="PHOTOSYSTEM I IRON-SULFUR CENTER"/>
    <property type="match status" value="1"/>
</dbReference>
<dbReference type="PANTHER" id="PTHR24960">
    <property type="entry name" value="PHOTOSYSTEM I IRON-SULFUR CENTER-RELATED"/>
    <property type="match status" value="1"/>
</dbReference>
<dbReference type="Pfam" id="PF14697">
    <property type="entry name" value="Fer4_21"/>
    <property type="match status" value="1"/>
</dbReference>
<dbReference type="SUPFAM" id="SSF54862">
    <property type="entry name" value="4Fe-4S ferredoxins"/>
    <property type="match status" value="1"/>
</dbReference>
<dbReference type="PROSITE" id="PS00198">
    <property type="entry name" value="4FE4S_FER_1"/>
    <property type="match status" value="2"/>
</dbReference>
<dbReference type="PROSITE" id="PS51379">
    <property type="entry name" value="4FE4S_FER_2"/>
    <property type="match status" value="2"/>
</dbReference>